<protein>
    <recommendedName>
        <fullName>Chitin synthase export chaperone</fullName>
    </recommendedName>
</protein>
<name>CHS7_KLULA</name>
<feature type="chain" id="PRO_0000280580" description="Chitin synthase export chaperone">
    <location>
        <begin position="1"/>
        <end position="317"/>
    </location>
</feature>
<feature type="transmembrane region" description="Helical" evidence="2">
    <location>
        <begin position="63"/>
        <end position="83"/>
    </location>
</feature>
<feature type="transmembrane region" description="Helical" evidence="2">
    <location>
        <begin position="101"/>
        <end position="121"/>
    </location>
</feature>
<feature type="transmembrane region" description="Helical" evidence="2">
    <location>
        <begin position="133"/>
        <end position="153"/>
    </location>
</feature>
<feature type="transmembrane region" description="Helical" evidence="2">
    <location>
        <begin position="164"/>
        <end position="184"/>
    </location>
</feature>
<feature type="transmembrane region" description="Helical" evidence="2">
    <location>
        <begin position="204"/>
        <end position="224"/>
    </location>
</feature>
<feature type="transmembrane region" description="Helical" evidence="2">
    <location>
        <begin position="236"/>
        <end position="256"/>
    </location>
</feature>
<feature type="transmembrane region" description="Helical" evidence="2">
    <location>
        <begin position="266"/>
        <end position="286"/>
    </location>
</feature>
<dbReference type="EMBL" id="CR382124">
    <property type="protein sequence ID" value="CAH00509.1"/>
    <property type="molecule type" value="Genomic_DNA"/>
</dbReference>
<dbReference type="RefSeq" id="XP_453413.1">
    <property type="nucleotide sequence ID" value="XM_453413.1"/>
</dbReference>
<dbReference type="FunCoup" id="Q6CRM6">
    <property type="interactions" value="76"/>
</dbReference>
<dbReference type="STRING" id="284590.Q6CRM6"/>
<dbReference type="PaxDb" id="284590-Q6CRM6"/>
<dbReference type="KEGG" id="kla:KLLA0_D07854g"/>
<dbReference type="eggNOG" id="ENOG502QRVH">
    <property type="taxonomic scope" value="Eukaryota"/>
</dbReference>
<dbReference type="HOGENOM" id="CLU_050424_1_1_1"/>
<dbReference type="InParanoid" id="Q6CRM6"/>
<dbReference type="OMA" id="TVWEVKD"/>
<dbReference type="Proteomes" id="UP000000598">
    <property type="component" value="Chromosome D"/>
</dbReference>
<dbReference type="GO" id="GO:0005789">
    <property type="term" value="C:endoplasmic reticulum membrane"/>
    <property type="evidence" value="ECO:0007669"/>
    <property type="project" value="UniProtKB-SubCell"/>
</dbReference>
<dbReference type="GO" id="GO:0051082">
    <property type="term" value="F:unfolded protein binding"/>
    <property type="evidence" value="ECO:0007669"/>
    <property type="project" value="TreeGrafter"/>
</dbReference>
<dbReference type="GO" id="GO:0071555">
    <property type="term" value="P:cell wall organization"/>
    <property type="evidence" value="ECO:0007669"/>
    <property type="project" value="UniProtKB-KW"/>
</dbReference>
<dbReference type="GO" id="GO:0006457">
    <property type="term" value="P:protein folding"/>
    <property type="evidence" value="ECO:0007669"/>
    <property type="project" value="TreeGrafter"/>
</dbReference>
<dbReference type="GO" id="GO:0015031">
    <property type="term" value="P:protein transport"/>
    <property type="evidence" value="ECO:0007669"/>
    <property type="project" value="UniProtKB-KW"/>
</dbReference>
<dbReference type="InterPro" id="IPR022057">
    <property type="entry name" value="Chs7"/>
</dbReference>
<dbReference type="PANTHER" id="PTHR35329">
    <property type="entry name" value="CHITIN SYNTHASE EXPORT CHAPERONE"/>
    <property type="match status" value="1"/>
</dbReference>
<dbReference type="PANTHER" id="PTHR35329:SF2">
    <property type="entry name" value="CHITIN SYNTHASE EXPORT CHAPERONE"/>
    <property type="match status" value="1"/>
</dbReference>
<dbReference type="Pfam" id="PF12271">
    <property type="entry name" value="Chs7"/>
    <property type="match status" value="1"/>
</dbReference>
<evidence type="ECO:0000250" key="1"/>
<evidence type="ECO:0000255" key="2"/>
<evidence type="ECO:0000305" key="3"/>
<reference key="1">
    <citation type="journal article" date="2004" name="Nature">
        <title>Genome evolution in yeasts.</title>
        <authorList>
            <person name="Dujon B."/>
            <person name="Sherman D."/>
            <person name="Fischer G."/>
            <person name="Durrens P."/>
            <person name="Casaregola S."/>
            <person name="Lafontaine I."/>
            <person name="de Montigny J."/>
            <person name="Marck C."/>
            <person name="Neuveglise C."/>
            <person name="Talla E."/>
            <person name="Goffard N."/>
            <person name="Frangeul L."/>
            <person name="Aigle M."/>
            <person name="Anthouard V."/>
            <person name="Babour A."/>
            <person name="Barbe V."/>
            <person name="Barnay S."/>
            <person name="Blanchin S."/>
            <person name="Beckerich J.-M."/>
            <person name="Beyne E."/>
            <person name="Bleykasten C."/>
            <person name="Boisrame A."/>
            <person name="Boyer J."/>
            <person name="Cattolico L."/>
            <person name="Confanioleri F."/>
            <person name="de Daruvar A."/>
            <person name="Despons L."/>
            <person name="Fabre E."/>
            <person name="Fairhead C."/>
            <person name="Ferry-Dumazet H."/>
            <person name="Groppi A."/>
            <person name="Hantraye F."/>
            <person name="Hennequin C."/>
            <person name="Jauniaux N."/>
            <person name="Joyet P."/>
            <person name="Kachouri R."/>
            <person name="Kerrest A."/>
            <person name="Koszul R."/>
            <person name="Lemaire M."/>
            <person name="Lesur I."/>
            <person name="Ma L."/>
            <person name="Muller H."/>
            <person name="Nicaud J.-M."/>
            <person name="Nikolski M."/>
            <person name="Oztas S."/>
            <person name="Ozier-Kalogeropoulos O."/>
            <person name="Pellenz S."/>
            <person name="Potier S."/>
            <person name="Richard G.-F."/>
            <person name="Straub M.-L."/>
            <person name="Suleau A."/>
            <person name="Swennen D."/>
            <person name="Tekaia F."/>
            <person name="Wesolowski-Louvel M."/>
            <person name="Westhof E."/>
            <person name="Wirth B."/>
            <person name="Zeniou-Meyer M."/>
            <person name="Zivanovic Y."/>
            <person name="Bolotin-Fukuhara M."/>
            <person name="Thierry A."/>
            <person name="Bouchier C."/>
            <person name="Caudron B."/>
            <person name="Scarpelli C."/>
            <person name="Gaillardin C."/>
            <person name="Weissenbach J."/>
            <person name="Wincker P."/>
            <person name="Souciet J.-L."/>
        </authorList>
    </citation>
    <scope>NUCLEOTIDE SEQUENCE [LARGE SCALE GENOMIC DNA]</scope>
    <source>
        <strain>ATCC 8585 / CBS 2359 / DSM 70799 / NBRC 1267 / NRRL Y-1140 / WM37</strain>
    </source>
</reference>
<accession>Q6CRM6</accession>
<gene>
    <name type="primary">CHS7</name>
    <name type="ordered locus">KLLA0D07854g</name>
</gene>
<comment type="function">
    <text evidence="1">Chaperone required for the export of the chitin synthase CHS3 from the endoplasmic reticulum.</text>
</comment>
<comment type="subunit">
    <text evidence="1">Interacts with CHS3.</text>
</comment>
<comment type="subcellular location">
    <subcellularLocation>
        <location evidence="1">Endoplasmic reticulum membrane</location>
        <topology evidence="1">Multi-pass membrane protein</topology>
    </subcellularLocation>
</comment>
<comment type="similarity">
    <text evidence="3">Belongs to the CHS7 family.</text>
</comment>
<organism>
    <name type="scientific">Kluyveromyces lactis (strain ATCC 8585 / CBS 2359 / DSM 70799 / NBRC 1267 / NRRL Y-1140 / WM37)</name>
    <name type="common">Yeast</name>
    <name type="synonym">Candida sphaerica</name>
    <dbReference type="NCBI Taxonomy" id="284590"/>
    <lineage>
        <taxon>Eukaryota</taxon>
        <taxon>Fungi</taxon>
        <taxon>Dikarya</taxon>
        <taxon>Ascomycota</taxon>
        <taxon>Saccharomycotina</taxon>
        <taxon>Saccharomycetes</taxon>
        <taxon>Saccharomycetales</taxon>
        <taxon>Saccharomycetaceae</taxon>
        <taxon>Kluyveromyces</taxon>
    </lineage>
</organism>
<sequence>MSFGDFSKICQRTPLPLCSVVKSAKQMVLTNDTTIKNSRLDIIDLGIIPVCYARSIDVANTMIFEIGNAFINIVAFFLLIIIIYNVRRKVTAIGRSEYSYFFQTCLVLIIFTLIVDCGVSAPGSSAYPYLVSVQLGLAGACCWMLSVLGLLGFRLWEDGTFKSMLLLYGMSFGGFILNFVVSIVTFKEWIQRKSDMSTDTMGLFTVMYVINALALLIYIICLLIVSVKVLQNYWATGAILLGVFFFVAGQVLIYAFSNNICEGMNHYLDGMFFGSLCNLFAIMMLYKNWDMSTDDDLEFSVSIDSTEYSTFNSDIKL</sequence>
<keyword id="KW-0961">Cell wall biogenesis/degradation</keyword>
<keyword id="KW-0256">Endoplasmic reticulum</keyword>
<keyword id="KW-0472">Membrane</keyword>
<keyword id="KW-0653">Protein transport</keyword>
<keyword id="KW-1185">Reference proteome</keyword>
<keyword id="KW-0812">Transmembrane</keyword>
<keyword id="KW-1133">Transmembrane helix</keyword>
<keyword id="KW-0813">Transport</keyword>
<proteinExistence type="inferred from homology"/>